<evidence type="ECO:0000255" key="1">
    <source>
        <dbReference type="HAMAP-Rule" id="MF_01367"/>
    </source>
</evidence>
<evidence type="ECO:0000305" key="2"/>
<organism>
    <name type="scientific">Chlorobium luteolum (strain DSM 273 / BCRC 81028 / 2530)</name>
    <name type="common">Pelodictyon luteolum</name>
    <dbReference type="NCBI Taxonomy" id="319225"/>
    <lineage>
        <taxon>Bacteria</taxon>
        <taxon>Pseudomonadati</taxon>
        <taxon>Chlorobiota</taxon>
        <taxon>Chlorobiia</taxon>
        <taxon>Chlorobiales</taxon>
        <taxon>Chlorobiaceae</taxon>
        <taxon>Chlorobium/Pelodictyon group</taxon>
        <taxon>Pelodictyon</taxon>
    </lineage>
</organism>
<dbReference type="EMBL" id="CP000096">
    <property type="protein sequence ID" value="ABB23079.1"/>
    <property type="molecule type" value="Genomic_DNA"/>
</dbReference>
<dbReference type="RefSeq" id="WP_011356955.1">
    <property type="nucleotide sequence ID" value="NC_007512.1"/>
</dbReference>
<dbReference type="SMR" id="Q3B6F2"/>
<dbReference type="STRING" id="319225.Plut_0191"/>
<dbReference type="KEGG" id="plt:Plut_0191"/>
<dbReference type="eggNOG" id="COG0093">
    <property type="taxonomic scope" value="Bacteria"/>
</dbReference>
<dbReference type="HOGENOM" id="CLU_095071_2_1_10"/>
<dbReference type="OrthoDB" id="9806379at2"/>
<dbReference type="Proteomes" id="UP000002709">
    <property type="component" value="Chromosome"/>
</dbReference>
<dbReference type="GO" id="GO:0022625">
    <property type="term" value="C:cytosolic large ribosomal subunit"/>
    <property type="evidence" value="ECO:0007669"/>
    <property type="project" value="TreeGrafter"/>
</dbReference>
<dbReference type="GO" id="GO:0070180">
    <property type="term" value="F:large ribosomal subunit rRNA binding"/>
    <property type="evidence" value="ECO:0007669"/>
    <property type="project" value="TreeGrafter"/>
</dbReference>
<dbReference type="GO" id="GO:0003735">
    <property type="term" value="F:structural constituent of ribosome"/>
    <property type="evidence" value="ECO:0007669"/>
    <property type="project" value="InterPro"/>
</dbReference>
<dbReference type="GO" id="GO:0006412">
    <property type="term" value="P:translation"/>
    <property type="evidence" value="ECO:0007669"/>
    <property type="project" value="UniProtKB-UniRule"/>
</dbReference>
<dbReference type="CDD" id="cd00337">
    <property type="entry name" value="Ribosomal_uL14"/>
    <property type="match status" value="1"/>
</dbReference>
<dbReference type="FunFam" id="2.40.150.20:FF:000001">
    <property type="entry name" value="50S ribosomal protein L14"/>
    <property type="match status" value="1"/>
</dbReference>
<dbReference type="Gene3D" id="2.40.150.20">
    <property type="entry name" value="Ribosomal protein L14"/>
    <property type="match status" value="1"/>
</dbReference>
<dbReference type="HAMAP" id="MF_01367">
    <property type="entry name" value="Ribosomal_uL14"/>
    <property type="match status" value="1"/>
</dbReference>
<dbReference type="InterPro" id="IPR000218">
    <property type="entry name" value="Ribosomal_uL14"/>
</dbReference>
<dbReference type="InterPro" id="IPR005745">
    <property type="entry name" value="Ribosomal_uL14_bac-type"/>
</dbReference>
<dbReference type="InterPro" id="IPR019972">
    <property type="entry name" value="Ribosomal_uL14_CS"/>
</dbReference>
<dbReference type="InterPro" id="IPR036853">
    <property type="entry name" value="Ribosomal_uL14_sf"/>
</dbReference>
<dbReference type="NCBIfam" id="TIGR01067">
    <property type="entry name" value="rplN_bact"/>
    <property type="match status" value="1"/>
</dbReference>
<dbReference type="PANTHER" id="PTHR11761">
    <property type="entry name" value="50S/60S RIBOSOMAL PROTEIN L14/L23"/>
    <property type="match status" value="1"/>
</dbReference>
<dbReference type="PANTHER" id="PTHR11761:SF3">
    <property type="entry name" value="LARGE RIBOSOMAL SUBUNIT PROTEIN UL14M"/>
    <property type="match status" value="1"/>
</dbReference>
<dbReference type="Pfam" id="PF00238">
    <property type="entry name" value="Ribosomal_L14"/>
    <property type="match status" value="1"/>
</dbReference>
<dbReference type="SMART" id="SM01374">
    <property type="entry name" value="Ribosomal_L14"/>
    <property type="match status" value="1"/>
</dbReference>
<dbReference type="SUPFAM" id="SSF50193">
    <property type="entry name" value="Ribosomal protein L14"/>
    <property type="match status" value="1"/>
</dbReference>
<dbReference type="PROSITE" id="PS00049">
    <property type="entry name" value="RIBOSOMAL_L14"/>
    <property type="match status" value="1"/>
</dbReference>
<reference key="1">
    <citation type="submission" date="2005-08" db="EMBL/GenBank/DDBJ databases">
        <title>Complete sequence of Pelodictyon luteolum DSM 273.</title>
        <authorList>
            <consortium name="US DOE Joint Genome Institute"/>
            <person name="Copeland A."/>
            <person name="Lucas S."/>
            <person name="Lapidus A."/>
            <person name="Barry K."/>
            <person name="Detter J.C."/>
            <person name="Glavina T."/>
            <person name="Hammon N."/>
            <person name="Israni S."/>
            <person name="Pitluck S."/>
            <person name="Bryant D."/>
            <person name="Schmutz J."/>
            <person name="Larimer F."/>
            <person name="Land M."/>
            <person name="Kyrpides N."/>
            <person name="Ivanova N."/>
            <person name="Richardson P."/>
        </authorList>
    </citation>
    <scope>NUCLEOTIDE SEQUENCE [LARGE SCALE GENOMIC DNA]</scope>
    <source>
        <strain>DSM 273 / BCRC 81028 / 2530</strain>
    </source>
</reference>
<accession>Q3B6F2</accession>
<protein>
    <recommendedName>
        <fullName evidence="1">Large ribosomal subunit protein uL14</fullName>
    </recommendedName>
    <alternativeName>
        <fullName evidence="2">50S ribosomal protein L14</fullName>
    </alternativeName>
</protein>
<proteinExistence type="inferred from homology"/>
<feature type="chain" id="PRO_0000266517" description="Large ribosomal subunit protein uL14">
    <location>
        <begin position="1"/>
        <end position="122"/>
    </location>
</feature>
<gene>
    <name evidence="1" type="primary">rplN</name>
    <name type="ordered locus">Plut_0191</name>
</gene>
<keyword id="KW-1185">Reference proteome</keyword>
<keyword id="KW-0687">Ribonucleoprotein</keyword>
<keyword id="KW-0689">Ribosomal protein</keyword>
<keyword id="KW-0694">RNA-binding</keyword>
<keyword id="KW-0699">rRNA-binding</keyword>
<comment type="function">
    <text evidence="1">Binds to 23S rRNA. Forms part of two intersubunit bridges in the 70S ribosome.</text>
</comment>
<comment type="subunit">
    <text evidence="1">Part of the 50S ribosomal subunit. Forms a cluster with proteins L3 and L19. In the 70S ribosome, L14 and L19 interact and together make contacts with the 16S rRNA in bridges B5 and B8.</text>
</comment>
<comment type="similarity">
    <text evidence="1">Belongs to the universal ribosomal protein uL14 family.</text>
</comment>
<name>RL14_CHLL3</name>
<sequence length="122" mass="13466">MIQKETNLVVADNSGAKKVRCIHVFGGTGRRYASLGDQVIVSVKAAVPGGVVKKKEVCKAVVVRCVKEQRRKDGSYIRFDENAVVLLNAQGEPRGTRIFGPVARELRDRRYMKIVSLAPEVL</sequence>